<gene>
    <name evidence="1" type="primary">argS</name>
    <name type="ordered locus">Mfl554</name>
</gene>
<accession>Q6F0R1</accession>
<proteinExistence type="inferred from homology"/>
<comment type="catalytic activity">
    <reaction evidence="1">
        <text>tRNA(Arg) + L-arginine + ATP = L-arginyl-tRNA(Arg) + AMP + diphosphate</text>
        <dbReference type="Rhea" id="RHEA:20301"/>
        <dbReference type="Rhea" id="RHEA-COMP:9658"/>
        <dbReference type="Rhea" id="RHEA-COMP:9673"/>
        <dbReference type="ChEBI" id="CHEBI:30616"/>
        <dbReference type="ChEBI" id="CHEBI:32682"/>
        <dbReference type="ChEBI" id="CHEBI:33019"/>
        <dbReference type="ChEBI" id="CHEBI:78442"/>
        <dbReference type="ChEBI" id="CHEBI:78513"/>
        <dbReference type="ChEBI" id="CHEBI:456215"/>
        <dbReference type="EC" id="6.1.1.19"/>
    </reaction>
</comment>
<comment type="subunit">
    <text evidence="1">Monomer.</text>
</comment>
<comment type="subcellular location">
    <subcellularLocation>
        <location evidence="1">Cytoplasm</location>
    </subcellularLocation>
</comment>
<comment type="similarity">
    <text evidence="1">Belongs to the class-I aminoacyl-tRNA synthetase family.</text>
</comment>
<sequence>MENIISIVKKDLKEIAQKFNISKDPIVEINKNNIDSHFSTTLALMSAKELKQNPIQLAENIKNELLQKDYYDQIEIAGPGFINIKLKTELLSTTIKNITTLKEAYGKNKIKNKIINIEYVSANPTGFLHVGHARNAVTGSVLEEVLKFDGYEVQTEFYTNDAGNQINILAVTVFVHYLWALGIETEKPANTYGGTFYDDLANIMIQKYGDKFKNLTFTETAISDEETHQIFRKEAVQHFLTEIKQQLKDFGVVIDHYSSEQEMYDTNQIEKLLKEYKEKNATYEADGALWLKTTEFGDDKDRVLVKKDGSLTYIVPDLATHNIRIQRTHADVLINIWGGDHHGYIPRMRAGLQLLGHNPDILEIEMVQMVRLIKDGKEYKMSKRKGTAVWLVDIMEMVGKDALRYMLASKSSSSHMDLDLDLVQQKNATNPVYYAQYATARCHSILNQADQKNIKANLNVSNLLSNKKEVELLLTLDNFNQVIQMSAKNRAPQLICEYIQTVCKQFHSYYADTKILDENDVPTSEARLGLVLSVLQVLTNAFNIIGVSALETM</sequence>
<name>SYR_MESFL</name>
<dbReference type="EC" id="6.1.1.19" evidence="1"/>
<dbReference type="EMBL" id="AE017263">
    <property type="protein sequence ID" value="AAT75912.1"/>
    <property type="molecule type" value="Genomic_DNA"/>
</dbReference>
<dbReference type="RefSeq" id="WP_011183452.1">
    <property type="nucleotide sequence ID" value="NC_006055.1"/>
</dbReference>
<dbReference type="RefSeq" id="YP_053796.1">
    <property type="nucleotide sequence ID" value="NC_006055.1"/>
</dbReference>
<dbReference type="SMR" id="Q6F0R1"/>
<dbReference type="STRING" id="265311.Mfl554"/>
<dbReference type="PaxDb" id="265311-Mfl554"/>
<dbReference type="EnsemblBacteria" id="AAT75912">
    <property type="protein sequence ID" value="AAT75912"/>
    <property type="gene ID" value="Mfl554"/>
</dbReference>
<dbReference type="GeneID" id="2897600"/>
<dbReference type="KEGG" id="mfl:Mfl554"/>
<dbReference type="PATRIC" id="fig|265311.5.peg.559"/>
<dbReference type="eggNOG" id="COG0018">
    <property type="taxonomic scope" value="Bacteria"/>
</dbReference>
<dbReference type="HOGENOM" id="CLU_006406_0_1_14"/>
<dbReference type="OrthoDB" id="9805987at2"/>
<dbReference type="Proteomes" id="UP000006647">
    <property type="component" value="Chromosome"/>
</dbReference>
<dbReference type="GO" id="GO:0005737">
    <property type="term" value="C:cytoplasm"/>
    <property type="evidence" value="ECO:0007669"/>
    <property type="project" value="UniProtKB-SubCell"/>
</dbReference>
<dbReference type="GO" id="GO:0004814">
    <property type="term" value="F:arginine-tRNA ligase activity"/>
    <property type="evidence" value="ECO:0007669"/>
    <property type="project" value="UniProtKB-UniRule"/>
</dbReference>
<dbReference type="GO" id="GO:0005524">
    <property type="term" value="F:ATP binding"/>
    <property type="evidence" value="ECO:0007669"/>
    <property type="project" value="UniProtKB-UniRule"/>
</dbReference>
<dbReference type="GO" id="GO:0006420">
    <property type="term" value="P:arginyl-tRNA aminoacylation"/>
    <property type="evidence" value="ECO:0007669"/>
    <property type="project" value="UniProtKB-UniRule"/>
</dbReference>
<dbReference type="CDD" id="cd00671">
    <property type="entry name" value="ArgRS_core"/>
    <property type="match status" value="1"/>
</dbReference>
<dbReference type="FunFam" id="1.10.730.10:FF:000008">
    <property type="entry name" value="Arginine--tRNA ligase"/>
    <property type="match status" value="1"/>
</dbReference>
<dbReference type="FunFam" id="3.40.50.620:FF:000062">
    <property type="entry name" value="Arginine--tRNA ligase"/>
    <property type="match status" value="1"/>
</dbReference>
<dbReference type="Gene3D" id="3.30.1360.70">
    <property type="entry name" value="Arginyl tRNA synthetase N-terminal domain"/>
    <property type="match status" value="1"/>
</dbReference>
<dbReference type="Gene3D" id="3.40.50.620">
    <property type="entry name" value="HUPs"/>
    <property type="match status" value="1"/>
</dbReference>
<dbReference type="Gene3D" id="1.10.730.10">
    <property type="entry name" value="Isoleucyl-tRNA Synthetase, Domain 1"/>
    <property type="match status" value="1"/>
</dbReference>
<dbReference type="HAMAP" id="MF_00123">
    <property type="entry name" value="Arg_tRNA_synth"/>
    <property type="match status" value="1"/>
</dbReference>
<dbReference type="InterPro" id="IPR001412">
    <property type="entry name" value="aa-tRNA-synth_I_CS"/>
</dbReference>
<dbReference type="InterPro" id="IPR001278">
    <property type="entry name" value="Arg-tRNA-ligase"/>
</dbReference>
<dbReference type="InterPro" id="IPR005148">
    <property type="entry name" value="Arg-tRNA-synth_N"/>
</dbReference>
<dbReference type="InterPro" id="IPR036695">
    <property type="entry name" value="Arg-tRNA-synth_N_sf"/>
</dbReference>
<dbReference type="InterPro" id="IPR035684">
    <property type="entry name" value="ArgRS_core"/>
</dbReference>
<dbReference type="InterPro" id="IPR008909">
    <property type="entry name" value="DALR_anticod-bd"/>
</dbReference>
<dbReference type="InterPro" id="IPR014729">
    <property type="entry name" value="Rossmann-like_a/b/a_fold"/>
</dbReference>
<dbReference type="InterPro" id="IPR009080">
    <property type="entry name" value="tRNAsynth_Ia_anticodon-bd"/>
</dbReference>
<dbReference type="NCBIfam" id="TIGR00456">
    <property type="entry name" value="argS"/>
    <property type="match status" value="1"/>
</dbReference>
<dbReference type="PANTHER" id="PTHR11956:SF5">
    <property type="entry name" value="ARGININE--TRNA LIGASE, CYTOPLASMIC"/>
    <property type="match status" value="1"/>
</dbReference>
<dbReference type="PANTHER" id="PTHR11956">
    <property type="entry name" value="ARGINYL-TRNA SYNTHETASE"/>
    <property type="match status" value="1"/>
</dbReference>
<dbReference type="Pfam" id="PF03485">
    <property type="entry name" value="Arg_tRNA_synt_N"/>
    <property type="match status" value="1"/>
</dbReference>
<dbReference type="Pfam" id="PF05746">
    <property type="entry name" value="DALR_1"/>
    <property type="match status" value="1"/>
</dbReference>
<dbReference type="Pfam" id="PF00750">
    <property type="entry name" value="tRNA-synt_1d"/>
    <property type="match status" value="1"/>
</dbReference>
<dbReference type="PRINTS" id="PR01038">
    <property type="entry name" value="TRNASYNTHARG"/>
</dbReference>
<dbReference type="SMART" id="SM01016">
    <property type="entry name" value="Arg_tRNA_synt_N"/>
    <property type="match status" value="1"/>
</dbReference>
<dbReference type="SMART" id="SM00836">
    <property type="entry name" value="DALR_1"/>
    <property type="match status" value="1"/>
</dbReference>
<dbReference type="SUPFAM" id="SSF47323">
    <property type="entry name" value="Anticodon-binding domain of a subclass of class I aminoacyl-tRNA synthetases"/>
    <property type="match status" value="1"/>
</dbReference>
<dbReference type="SUPFAM" id="SSF55190">
    <property type="entry name" value="Arginyl-tRNA synthetase (ArgRS), N-terminal 'additional' domain"/>
    <property type="match status" value="1"/>
</dbReference>
<dbReference type="SUPFAM" id="SSF52374">
    <property type="entry name" value="Nucleotidylyl transferase"/>
    <property type="match status" value="1"/>
</dbReference>
<dbReference type="PROSITE" id="PS00178">
    <property type="entry name" value="AA_TRNA_LIGASE_I"/>
    <property type="match status" value="1"/>
</dbReference>
<organism>
    <name type="scientific">Mesoplasma florum (strain ATCC 33453 / NBRC 100688 / NCTC 11704 / L1)</name>
    <name type="common">Acholeplasma florum</name>
    <dbReference type="NCBI Taxonomy" id="265311"/>
    <lineage>
        <taxon>Bacteria</taxon>
        <taxon>Bacillati</taxon>
        <taxon>Mycoplasmatota</taxon>
        <taxon>Mollicutes</taxon>
        <taxon>Entomoplasmatales</taxon>
        <taxon>Entomoplasmataceae</taxon>
        <taxon>Mesoplasma</taxon>
    </lineage>
</organism>
<evidence type="ECO:0000255" key="1">
    <source>
        <dbReference type="HAMAP-Rule" id="MF_00123"/>
    </source>
</evidence>
<feature type="chain" id="PRO_0000242042" description="Arginine--tRNA ligase">
    <location>
        <begin position="1"/>
        <end position="553"/>
    </location>
</feature>
<feature type="short sequence motif" description="'HIGH' region">
    <location>
        <begin position="122"/>
        <end position="132"/>
    </location>
</feature>
<reference key="1">
    <citation type="submission" date="2004-06" db="EMBL/GenBank/DDBJ databases">
        <authorList>
            <person name="Birren B.W."/>
            <person name="Stange-Thomann N."/>
            <person name="Hafez N."/>
            <person name="DeCaprio D."/>
            <person name="Fisher S."/>
            <person name="Butler J."/>
            <person name="Elkins T."/>
            <person name="Kodira C.D."/>
            <person name="Major J."/>
            <person name="Wang S."/>
            <person name="Nicol R."/>
            <person name="Nusbaum C."/>
        </authorList>
    </citation>
    <scope>NUCLEOTIDE SEQUENCE [LARGE SCALE GENOMIC DNA]</scope>
    <source>
        <strain>ATCC 33453 / NBRC 100688 / NCTC 11704 / L1</strain>
    </source>
</reference>
<protein>
    <recommendedName>
        <fullName evidence="1">Arginine--tRNA ligase</fullName>
        <ecNumber evidence="1">6.1.1.19</ecNumber>
    </recommendedName>
    <alternativeName>
        <fullName evidence="1">Arginyl-tRNA synthetase</fullName>
        <shortName evidence="1">ArgRS</shortName>
    </alternativeName>
</protein>
<keyword id="KW-0030">Aminoacyl-tRNA synthetase</keyword>
<keyword id="KW-0067">ATP-binding</keyword>
<keyword id="KW-0963">Cytoplasm</keyword>
<keyword id="KW-0436">Ligase</keyword>
<keyword id="KW-0547">Nucleotide-binding</keyword>
<keyword id="KW-0648">Protein biosynthesis</keyword>
<keyword id="KW-1185">Reference proteome</keyword>